<protein>
    <recommendedName>
        <fullName evidence="1">Potassium-transporting ATPase ATP-binding subunit 2</fullName>
        <ecNumber evidence="1">7.2.2.6</ecNumber>
    </recommendedName>
    <alternativeName>
        <fullName evidence="1">ATP phosphohydrolase [potassium-transporting] B chain 2</fullName>
    </alternativeName>
    <alternativeName>
        <fullName evidence="1">Potassium-binding and translocating subunit B 2</fullName>
    </alternativeName>
    <alternativeName>
        <fullName evidence="1">Potassium-translocating ATPase B chain 2</fullName>
    </alternativeName>
</protein>
<feature type="chain" id="PRO_0000046140" description="Potassium-transporting ATPase ATP-binding subunit 2">
    <location>
        <begin position="1"/>
        <end position="675"/>
    </location>
</feature>
<feature type="transmembrane region" description="Helical" evidence="1">
    <location>
        <begin position="34"/>
        <end position="54"/>
    </location>
</feature>
<feature type="transmembrane region" description="Helical" evidence="1">
    <location>
        <begin position="65"/>
        <end position="85"/>
    </location>
</feature>
<feature type="transmembrane region" description="Helical" evidence="1">
    <location>
        <begin position="216"/>
        <end position="236"/>
    </location>
</feature>
<feature type="transmembrane region" description="Helical" evidence="1">
    <location>
        <begin position="245"/>
        <end position="265"/>
    </location>
</feature>
<feature type="transmembrane region" description="Helical" evidence="1">
    <location>
        <begin position="569"/>
        <end position="591"/>
    </location>
</feature>
<feature type="transmembrane region" description="Helical" evidence="1">
    <location>
        <begin position="611"/>
        <end position="631"/>
    </location>
</feature>
<feature type="transmembrane region" description="Helical" evidence="1">
    <location>
        <begin position="644"/>
        <end position="664"/>
    </location>
</feature>
<feature type="active site" description="4-aspartylphosphate intermediate" evidence="1">
    <location>
        <position position="304"/>
    </location>
</feature>
<feature type="binding site" evidence="1">
    <location>
        <position position="341"/>
    </location>
    <ligand>
        <name>ATP</name>
        <dbReference type="ChEBI" id="CHEBI:30616"/>
    </ligand>
</feature>
<feature type="binding site" evidence="1">
    <location>
        <position position="345"/>
    </location>
    <ligand>
        <name>ATP</name>
        <dbReference type="ChEBI" id="CHEBI:30616"/>
    </ligand>
</feature>
<feature type="binding site" evidence="1">
    <location>
        <begin position="372"/>
        <end position="379"/>
    </location>
    <ligand>
        <name>ATP</name>
        <dbReference type="ChEBI" id="CHEBI:30616"/>
    </ligand>
</feature>
<feature type="binding site" evidence="1">
    <location>
        <position position="390"/>
    </location>
    <ligand>
        <name>ATP</name>
        <dbReference type="ChEBI" id="CHEBI:30616"/>
    </ligand>
</feature>
<feature type="binding site" evidence="1">
    <location>
        <position position="513"/>
    </location>
    <ligand>
        <name>Mg(2+)</name>
        <dbReference type="ChEBI" id="CHEBI:18420"/>
    </ligand>
</feature>
<feature type="binding site" evidence="1">
    <location>
        <position position="517"/>
    </location>
    <ligand>
        <name>Mg(2+)</name>
        <dbReference type="ChEBI" id="CHEBI:18420"/>
    </ligand>
</feature>
<comment type="function">
    <text evidence="1">Part of the high-affinity ATP-driven potassium transport (or Kdp) system, which catalyzes the hydrolysis of ATP coupled with the electrogenic transport of potassium into the cytoplasm. This subunit is responsible for energy coupling to the transport system and for the release of the potassium ions to the cytoplasm.</text>
</comment>
<comment type="catalytic activity">
    <reaction evidence="1">
        <text>K(+)(out) + ATP + H2O = K(+)(in) + ADP + phosphate + H(+)</text>
        <dbReference type="Rhea" id="RHEA:16777"/>
        <dbReference type="ChEBI" id="CHEBI:15377"/>
        <dbReference type="ChEBI" id="CHEBI:15378"/>
        <dbReference type="ChEBI" id="CHEBI:29103"/>
        <dbReference type="ChEBI" id="CHEBI:30616"/>
        <dbReference type="ChEBI" id="CHEBI:43474"/>
        <dbReference type="ChEBI" id="CHEBI:456216"/>
        <dbReference type="EC" id="7.2.2.6"/>
    </reaction>
    <physiologicalReaction direction="left-to-right" evidence="1">
        <dbReference type="Rhea" id="RHEA:16778"/>
    </physiologicalReaction>
</comment>
<comment type="subunit">
    <text evidence="1">The system is composed of three essential subunits: KdpA, KdpB and KdpC.</text>
</comment>
<comment type="subcellular location">
    <subcellularLocation>
        <location evidence="1">Cell membrane</location>
        <topology evidence="1">Multi-pass membrane protein</topology>
    </subcellularLocation>
</comment>
<comment type="similarity">
    <text evidence="1">Belongs to the cation transport ATPase (P-type) (TC 3.A.3) family. Type IA subfamily.</text>
</comment>
<evidence type="ECO:0000255" key="1">
    <source>
        <dbReference type="HAMAP-Rule" id="MF_00285"/>
    </source>
</evidence>
<dbReference type="EC" id="7.2.2.6" evidence="1"/>
<dbReference type="EMBL" id="BX571856">
    <property type="protein sequence ID" value="CAG41145.1"/>
    <property type="molecule type" value="Genomic_DNA"/>
</dbReference>
<dbReference type="SMR" id="Q6GEZ7"/>
<dbReference type="KEGG" id="sar:SAR2164"/>
<dbReference type="HOGENOM" id="CLU_025728_2_0_9"/>
<dbReference type="Proteomes" id="UP000000596">
    <property type="component" value="Chromosome"/>
</dbReference>
<dbReference type="GO" id="GO:0005886">
    <property type="term" value="C:plasma membrane"/>
    <property type="evidence" value="ECO:0007669"/>
    <property type="project" value="UniProtKB-SubCell"/>
</dbReference>
<dbReference type="GO" id="GO:0005524">
    <property type="term" value="F:ATP binding"/>
    <property type="evidence" value="ECO:0007669"/>
    <property type="project" value="UniProtKB-UniRule"/>
</dbReference>
<dbReference type="GO" id="GO:0016887">
    <property type="term" value="F:ATP hydrolysis activity"/>
    <property type="evidence" value="ECO:0007669"/>
    <property type="project" value="InterPro"/>
</dbReference>
<dbReference type="GO" id="GO:0000287">
    <property type="term" value="F:magnesium ion binding"/>
    <property type="evidence" value="ECO:0007669"/>
    <property type="project" value="UniProtKB-UniRule"/>
</dbReference>
<dbReference type="GO" id="GO:0008556">
    <property type="term" value="F:P-type potassium transmembrane transporter activity"/>
    <property type="evidence" value="ECO:0007669"/>
    <property type="project" value="UniProtKB-UniRule"/>
</dbReference>
<dbReference type="FunFam" id="2.70.150.10:FF:000010">
    <property type="entry name" value="Potassium-transporting ATPase ATP-binding subunit"/>
    <property type="match status" value="1"/>
</dbReference>
<dbReference type="FunFam" id="3.40.1110.10:FF:000007">
    <property type="entry name" value="Potassium-transporting ATPase ATP-binding subunit"/>
    <property type="match status" value="1"/>
</dbReference>
<dbReference type="Gene3D" id="3.40.1110.10">
    <property type="entry name" value="Calcium-transporting ATPase, cytoplasmic domain N"/>
    <property type="match status" value="1"/>
</dbReference>
<dbReference type="Gene3D" id="2.70.150.10">
    <property type="entry name" value="Calcium-transporting ATPase, cytoplasmic transduction domain A"/>
    <property type="match status" value="1"/>
</dbReference>
<dbReference type="Gene3D" id="3.40.50.1000">
    <property type="entry name" value="HAD superfamily/HAD-like"/>
    <property type="match status" value="1"/>
</dbReference>
<dbReference type="HAMAP" id="MF_00285">
    <property type="entry name" value="KdpB"/>
    <property type="match status" value="1"/>
</dbReference>
<dbReference type="InterPro" id="IPR023299">
    <property type="entry name" value="ATPase_P-typ_cyto_dom_N"/>
</dbReference>
<dbReference type="InterPro" id="IPR018303">
    <property type="entry name" value="ATPase_P-typ_P_site"/>
</dbReference>
<dbReference type="InterPro" id="IPR023298">
    <property type="entry name" value="ATPase_P-typ_TM_dom_sf"/>
</dbReference>
<dbReference type="InterPro" id="IPR008250">
    <property type="entry name" value="ATPase_P-typ_transduc_dom_A_sf"/>
</dbReference>
<dbReference type="InterPro" id="IPR036412">
    <property type="entry name" value="HAD-like_sf"/>
</dbReference>
<dbReference type="InterPro" id="IPR023214">
    <property type="entry name" value="HAD_sf"/>
</dbReference>
<dbReference type="InterPro" id="IPR006391">
    <property type="entry name" value="P-type_ATPase_bsu_IA"/>
</dbReference>
<dbReference type="InterPro" id="IPR001757">
    <property type="entry name" value="P_typ_ATPase"/>
</dbReference>
<dbReference type="InterPro" id="IPR044492">
    <property type="entry name" value="P_typ_ATPase_HD_dom"/>
</dbReference>
<dbReference type="NCBIfam" id="TIGR01494">
    <property type="entry name" value="ATPase_P-type"/>
    <property type="match status" value="2"/>
</dbReference>
<dbReference type="NCBIfam" id="TIGR01497">
    <property type="entry name" value="kdpB"/>
    <property type="match status" value="1"/>
</dbReference>
<dbReference type="PANTHER" id="PTHR43743">
    <property type="entry name" value="POTASSIUM-TRANSPORTING ATPASE ATP-BINDING SUBUNIT"/>
    <property type="match status" value="1"/>
</dbReference>
<dbReference type="PANTHER" id="PTHR43743:SF1">
    <property type="entry name" value="POTASSIUM-TRANSPORTING ATPASE ATP-BINDING SUBUNIT"/>
    <property type="match status" value="1"/>
</dbReference>
<dbReference type="Pfam" id="PF00122">
    <property type="entry name" value="E1-E2_ATPase"/>
    <property type="match status" value="1"/>
</dbReference>
<dbReference type="Pfam" id="PF00702">
    <property type="entry name" value="Hydrolase"/>
    <property type="match status" value="1"/>
</dbReference>
<dbReference type="PRINTS" id="PR00119">
    <property type="entry name" value="CATATPASE"/>
</dbReference>
<dbReference type="SFLD" id="SFLDG00002">
    <property type="entry name" value="C1.7:_P-type_atpase_like"/>
    <property type="match status" value="1"/>
</dbReference>
<dbReference type="SFLD" id="SFLDF00027">
    <property type="entry name" value="p-type_atpase"/>
    <property type="match status" value="1"/>
</dbReference>
<dbReference type="SUPFAM" id="SSF81653">
    <property type="entry name" value="Calcium ATPase, transduction domain A"/>
    <property type="match status" value="1"/>
</dbReference>
<dbReference type="SUPFAM" id="SSF81665">
    <property type="entry name" value="Calcium ATPase, transmembrane domain M"/>
    <property type="match status" value="1"/>
</dbReference>
<dbReference type="SUPFAM" id="SSF56784">
    <property type="entry name" value="HAD-like"/>
    <property type="match status" value="1"/>
</dbReference>
<dbReference type="PROSITE" id="PS00154">
    <property type="entry name" value="ATPASE_E1_E2"/>
    <property type="match status" value="1"/>
</dbReference>
<organism>
    <name type="scientific">Staphylococcus aureus (strain MRSA252)</name>
    <dbReference type="NCBI Taxonomy" id="282458"/>
    <lineage>
        <taxon>Bacteria</taxon>
        <taxon>Bacillati</taxon>
        <taxon>Bacillota</taxon>
        <taxon>Bacilli</taxon>
        <taxon>Bacillales</taxon>
        <taxon>Staphylococcaceae</taxon>
        <taxon>Staphylococcus</taxon>
    </lineage>
</organism>
<gene>
    <name evidence="1" type="primary">kdpB2</name>
    <name type="ordered locus">SAR2164</name>
</gene>
<sequence length="675" mass="73125">MHHVNKYFNQTMVIEALKMSFYKLNPKQLIKNPIMFVVEVGMLLTLILICFPDIFGTSYLSRGYLITIFIILLITILFANFSEAFAEGRGKAQADSLRQAQSNLTARLIEENGAYRIVNATELKAGQNIRVENGETIPADGVVINGLATVDESAITGESAPVIKESGGDFDGVIGGTLVTSDWLEIRVESEAGTSFLDKMIALVEGAERNKTPNEIALFTLLTTLTIIFLVVIVTLYPIASYLHLILPIAMLIALTVCLIPTTIGGLLSAIGIAGMDRVTQFNVLAKSGRAVEVCGDVDVMILDKTGTITYGNRIASEFLPVNQQMMEKLIVAAYMSSIYDDTPEGKSIVRLAKQMYINELPKDIDGTYKPFTAETRMSGIITNEISVFKGAPNSMINLVKQQQGNIPLNIESICMDVSSKGGTPLIVIENNVMLGVIYLKDVIKDGLVERFAELRKMGIETVMCTGDNALTAATIAKEAGVDRFVAECKPEDKIKVIKDEQAKGHIVAMTGDGTNDAPALAQANIGLAMNSGTISAKEAANLIDLDSNPTKLIEVVKIGKQLLMTRGALTTFSLANDVAKYFAILPALMMSTIPEMTSLNIMHLSSPKSAIISALIFNALIIVALIPIAMKGVKVKGYSIDRIFINNMLIYGLGGLIVPFLGIKLIDMIVQFFV</sequence>
<name>KDPB2_STAAR</name>
<accession>Q6GEZ7</accession>
<reference key="1">
    <citation type="journal article" date="2004" name="Proc. Natl. Acad. Sci. U.S.A.">
        <title>Complete genomes of two clinical Staphylococcus aureus strains: evidence for the rapid evolution of virulence and drug resistance.</title>
        <authorList>
            <person name="Holden M.T.G."/>
            <person name="Feil E.J."/>
            <person name="Lindsay J.A."/>
            <person name="Peacock S.J."/>
            <person name="Day N.P.J."/>
            <person name="Enright M.C."/>
            <person name="Foster T.J."/>
            <person name="Moore C.E."/>
            <person name="Hurst L."/>
            <person name="Atkin R."/>
            <person name="Barron A."/>
            <person name="Bason N."/>
            <person name="Bentley S.D."/>
            <person name="Chillingworth C."/>
            <person name="Chillingworth T."/>
            <person name="Churcher C."/>
            <person name="Clark L."/>
            <person name="Corton C."/>
            <person name="Cronin A."/>
            <person name="Doggett J."/>
            <person name="Dowd L."/>
            <person name="Feltwell T."/>
            <person name="Hance Z."/>
            <person name="Harris B."/>
            <person name="Hauser H."/>
            <person name="Holroyd S."/>
            <person name="Jagels K."/>
            <person name="James K.D."/>
            <person name="Lennard N."/>
            <person name="Line A."/>
            <person name="Mayes R."/>
            <person name="Moule S."/>
            <person name="Mungall K."/>
            <person name="Ormond D."/>
            <person name="Quail M.A."/>
            <person name="Rabbinowitsch E."/>
            <person name="Rutherford K.M."/>
            <person name="Sanders M."/>
            <person name="Sharp S."/>
            <person name="Simmonds M."/>
            <person name="Stevens K."/>
            <person name="Whitehead S."/>
            <person name="Barrell B.G."/>
            <person name="Spratt B.G."/>
            <person name="Parkhill J."/>
        </authorList>
    </citation>
    <scope>NUCLEOTIDE SEQUENCE [LARGE SCALE GENOMIC DNA]</scope>
    <source>
        <strain>MRSA252</strain>
    </source>
</reference>
<proteinExistence type="inferred from homology"/>
<keyword id="KW-0067">ATP-binding</keyword>
<keyword id="KW-1003">Cell membrane</keyword>
<keyword id="KW-0406">Ion transport</keyword>
<keyword id="KW-0460">Magnesium</keyword>
<keyword id="KW-0472">Membrane</keyword>
<keyword id="KW-0479">Metal-binding</keyword>
<keyword id="KW-0547">Nucleotide-binding</keyword>
<keyword id="KW-0597">Phosphoprotein</keyword>
<keyword id="KW-0630">Potassium</keyword>
<keyword id="KW-0633">Potassium transport</keyword>
<keyword id="KW-1278">Translocase</keyword>
<keyword id="KW-0812">Transmembrane</keyword>
<keyword id="KW-1133">Transmembrane helix</keyword>
<keyword id="KW-0813">Transport</keyword>